<comment type="function">
    <text evidence="1">Catalyzes the ATP-dependent phosphorylation of L-homoserine to L-homoserine phosphate.</text>
</comment>
<comment type="catalytic activity">
    <reaction evidence="1">
        <text>L-homoserine + ATP = O-phospho-L-homoserine + ADP + H(+)</text>
        <dbReference type="Rhea" id="RHEA:13985"/>
        <dbReference type="ChEBI" id="CHEBI:15378"/>
        <dbReference type="ChEBI" id="CHEBI:30616"/>
        <dbReference type="ChEBI" id="CHEBI:57476"/>
        <dbReference type="ChEBI" id="CHEBI:57590"/>
        <dbReference type="ChEBI" id="CHEBI:456216"/>
        <dbReference type="EC" id="2.7.1.39"/>
    </reaction>
</comment>
<comment type="pathway">
    <text evidence="1">Amino-acid biosynthesis; L-threonine biosynthesis; L-threonine from L-aspartate: step 4/5.</text>
</comment>
<comment type="subcellular location">
    <subcellularLocation>
        <location evidence="1">Cytoplasm</location>
    </subcellularLocation>
</comment>
<comment type="similarity">
    <text evidence="1">Belongs to the GHMP kinase family. Homoserine kinase subfamily.</text>
</comment>
<feature type="chain" id="PRO_1000049175" description="Homoserine kinase">
    <location>
        <begin position="1"/>
        <end position="286"/>
    </location>
</feature>
<feature type="binding site" evidence="1">
    <location>
        <begin position="78"/>
        <end position="88"/>
    </location>
    <ligand>
        <name>ATP</name>
        <dbReference type="ChEBI" id="CHEBI:30616"/>
    </ligand>
</feature>
<name>KHSE_STRS2</name>
<accession>A4W0S2</accession>
<dbReference type="EC" id="2.7.1.39" evidence="1"/>
<dbReference type="EMBL" id="CP000408">
    <property type="protein sequence ID" value="ABP91961.1"/>
    <property type="molecule type" value="Genomic_DNA"/>
</dbReference>
<dbReference type="SMR" id="A4W0S2"/>
<dbReference type="KEGG" id="ssv:SSU98_0803"/>
<dbReference type="HOGENOM" id="CLU_041243_0_0_9"/>
<dbReference type="UniPathway" id="UPA00050">
    <property type="reaction ID" value="UER00064"/>
</dbReference>
<dbReference type="GO" id="GO:0005737">
    <property type="term" value="C:cytoplasm"/>
    <property type="evidence" value="ECO:0007669"/>
    <property type="project" value="UniProtKB-SubCell"/>
</dbReference>
<dbReference type="GO" id="GO:0005524">
    <property type="term" value="F:ATP binding"/>
    <property type="evidence" value="ECO:0007669"/>
    <property type="project" value="UniProtKB-UniRule"/>
</dbReference>
<dbReference type="GO" id="GO:0004413">
    <property type="term" value="F:homoserine kinase activity"/>
    <property type="evidence" value="ECO:0007669"/>
    <property type="project" value="UniProtKB-UniRule"/>
</dbReference>
<dbReference type="GO" id="GO:0009088">
    <property type="term" value="P:threonine biosynthetic process"/>
    <property type="evidence" value="ECO:0007669"/>
    <property type="project" value="UniProtKB-UniRule"/>
</dbReference>
<dbReference type="Gene3D" id="3.30.230.10">
    <property type="match status" value="1"/>
</dbReference>
<dbReference type="Gene3D" id="3.30.70.890">
    <property type="entry name" value="GHMP kinase, C-terminal domain"/>
    <property type="match status" value="1"/>
</dbReference>
<dbReference type="HAMAP" id="MF_00384">
    <property type="entry name" value="Homoser_kinase"/>
    <property type="match status" value="1"/>
</dbReference>
<dbReference type="InterPro" id="IPR013750">
    <property type="entry name" value="GHMP_kinase_C_dom"/>
</dbReference>
<dbReference type="InterPro" id="IPR036554">
    <property type="entry name" value="GHMP_kinase_C_sf"/>
</dbReference>
<dbReference type="InterPro" id="IPR006204">
    <property type="entry name" value="GHMP_kinase_N_dom"/>
</dbReference>
<dbReference type="InterPro" id="IPR006203">
    <property type="entry name" value="GHMP_knse_ATP-bd_CS"/>
</dbReference>
<dbReference type="InterPro" id="IPR000870">
    <property type="entry name" value="Homoserine_kinase"/>
</dbReference>
<dbReference type="InterPro" id="IPR020568">
    <property type="entry name" value="Ribosomal_Su5_D2-typ_SF"/>
</dbReference>
<dbReference type="InterPro" id="IPR014721">
    <property type="entry name" value="Ribsml_uS5_D2-typ_fold_subgr"/>
</dbReference>
<dbReference type="NCBIfam" id="TIGR00191">
    <property type="entry name" value="thrB"/>
    <property type="match status" value="1"/>
</dbReference>
<dbReference type="PANTHER" id="PTHR20861:SF1">
    <property type="entry name" value="HOMOSERINE KINASE"/>
    <property type="match status" value="1"/>
</dbReference>
<dbReference type="PANTHER" id="PTHR20861">
    <property type="entry name" value="HOMOSERINE/4-DIPHOSPHOCYTIDYL-2-C-METHYL-D-ERYTHRITOL KINASE"/>
    <property type="match status" value="1"/>
</dbReference>
<dbReference type="Pfam" id="PF08544">
    <property type="entry name" value="GHMP_kinases_C"/>
    <property type="match status" value="1"/>
</dbReference>
<dbReference type="Pfam" id="PF00288">
    <property type="entry name" value="GHMP_kinases_N"/>
    <property type="match status" value="1"/>
</dbReference>
<dbReference type="PIRSF" id="PIRSF000676">
    <property type="entry name" value="Homoser_kin"/>
    <property type="match status" value="1"/>
</dbReference>
<dbReference type="PRINTS" id="PR00958">
    <property type="entry name" value="HOMSERKINASE"/>
</dbReference>
<dbReference type="SUPFAM" id="SSF55060">
    <property type="entry name" value="GHMP Kinase, C-terminal domain"/>
    <property type="match status" value="1"/>
</dbReference>
<dbReference type="SUPFAM" id="SSF54211">
    <property type="entry name" value="Ribosomal protein S5 domain 2-like"/>
    <property type="match status" value="1"/>
</dbReference>
<dbReference type="PROSITE" id="PS00627">
    <property type="entry name" value="GHMP_KINASES_ATP"/>
    <property type="match status" value="1"/>
</dbReference>
<evidence type="ECO:0000255" key="1">
    <source>
        <dbReference type="HAMAP-Rule" id="MF_00384"/>
    </source>
</evidence>
<gene>
    <name evidence="1" type="primary">thrB</name>
    <name type="ordered locus">SSU98_0803</name>
</gene>
<organism>
    <name type="scientific">Streptococcus suis (strain 98HAH33)</name>
    <dbReference type="NCBI Taxonomy" id="391296"/>
    <lineage>
        <taxon>Bacteria</taxon>
        <taxon>Bacillati</taxon>
        <taxon>Bacillota</taxon>
        <taxon>Bacilli</taxon>
        <taxon>Lactobacillales</taxon>
        <taxon>Streptococcaceae</taxon>
        <taxon>Streptococcus</taxon>
    </lineage>
</organism>
<proteinExistence type="inferred from homology"/>
<sequence length="286" mass="30782">MKIIIPATSANIGPGFDSVGVALSKYLTIEVFEETDEWVIEHNLEHVPSDKNNLLIKTALKIEKGLQPHRIRMISDIPLARGLGSSSSVIVAGIELANQLAGLNMTADEKLLKATEIEGHPDNVAPAIFGNLVISSYVNKRVQAVVTEFPEASFVAFIPNYPLRTVESRGVLPSQMGYKKAVAASAIANVAVASLMAGDLEKAGKAIQSDMFHEPFRQLLVKEFCPIKQTAQELGAYATYLSGAGPTVMVLAPKDREDAIVLALEELNLDGTVHRLQVDTKGIAIV</sequence>
<keyword id="KW-0028">Amino-acid biosynthesis</keyword>
<keyword id="KW-0067">ATP-binding</keyword>
<keyword id="KW-0963">Cytoplasm</keyword>
<keyword id="KW-0418">Kinase</keyword>
<keyword id="KW-0547">Nucleotide-binding</keyword>
<keyword id="KW-0791">Threonine biosynthesis</keyword>
<keyword id="KW-0808">Transferase</keyword>
<protein>
    <recommendedName>
        <fullName evidence="1">Homoserine kinase</fullName>
        <shortName evidence="1">HK</shortName>
        <shortName evidence="1">HSK</shortName>
        <ecNumber evidence="1">2.7.1.39</ecNumber>
    </recommendedName>
</protein>
<reference key="1">
    <citation type="journal article" date="2007" name="PLoS ONE">
        <title>A glimpse of streptococcal toxic shock syndrome from comparative genomics of S. suis 2 Chinese isolates.</title>
        <authorList>
            <person name="Chen C."/>
            <person name="Tang J."/>
            <person name="Dong W."/>
            <person name="Wang C."/>
            <person name="Feng Y."/>
            <person name="Wang J."/>
            <person name="Zheng F."/>
            <person name="Pan X."/>
            <person name="Liu D."/>
            <person name="Li M."/>
            <person name="Song Y."/>
            <person name="Zhu X."/>
            <person name="Sun H."/>
            <person name="Feng T."/>
            <person name="Guo Z."/>
            <person name="Ju A."/>
            <person name="Ge J."/>
            <person name="Dong Y."/>
            <person name="Sun W."/>
            <person name="Jiang Y."/>
            <person name="Wang J."/>
            <person name="Yan J."/>
            <person name="Yang H."/>
            <person name="Wang X."/>
            <person name="Gao G.F."/>
            <person name="Yang R."/>
            <person name="Wang J."/>
            <person name="Yu J."/>
        </authorList>
    </citation>
    <scope>NUCLEOTIDE SEQUENCE [LARGE SCALE GENOMIC DNA]</scope>
    <source>
        <strain>98HAH33</strain>
    </source>
</reference>